<feature type="chain" id="PRO_1000129415" description="Quinolinate synthase">
    <location>
        <begin position="1"/>
        <end position="347"/>
    </location>
</feature>
<feature type="binding site" evidence="1">
    <location>
        <position position="47"/>
    </location>
    <ligand>
        <name>iminosuccinate</name>
        <dbReference type="ChEBI" id="CHEBI:77875"/>
    </ligand>
</feature>
<feature type="binding site" evidence="1">
    <location>
        <position position="68"/>
    </location>
    <ligand>
        <name>iminosuccinate</name>
        <dbReference type="ChEBI" id="CHEBI:77875"/>
    </ligand>
</feature>
<feature type="binding site" evidence="1">
    <location>
        <position position="113"/>
    </location>
    <ligand>
        <name>[4Fe-4S] cluster</name>
        <dbReference type="ChEBI" id="CHEBI:49883"/>
    </ligand>
</feature>
<feature type="binding site" evidence="1">
    <location>
        <begin position="139"/>
        <end position="141"/>
    </location>
    <ligand>
        <name>iminosuccinate</name>
        <dbReference type="ChEBI" id="CHEBI:77875"/>
    </ligand>
</feature>
<feature type="binding site" evidence="1">
    <location>
        <position position="156"/>
    </location>
    <ligand>
        <name>iminosuccinate</name>
        <dbReference type="ChEBI" id="CHEBI:77875"/>
    </ligand>
</feature>
<feature type="binding site" evidence="1">
    <location>
        <position position="200"/>
    </location>
    <ligand>
        <name>[4Fe-4S] cluster</name>
        <dbReference type="ChEBI" id="CHEBI:49883"/>
    </ligand>
</feature>
<feature type="binding site" evidence="1">
    <location>
        <begin position="226"/>
        <end position="228"/>
    </location>
    <ligand>
        <name>iminosuccinate</name>
        <dbReference type="ChEBI" id="CHEBI:77875"/>
    </ligand>
</feature>
<feature type="binding site" evidence="1">
    <location>
        <position position="243"/>
    </location>
    <ligand>
        <name>iminosuccinate</name>
        <dbReference type="ChEBI" id="CHEBI:77875"/>
    </ligand>
</feature>
<feature type="binding site" evidence="1">
    <location>
        <position position="297"/>
    </location>
    <ligand>
        <name>[4Fe-4S] cluster</name>
        <dbReference type="ChEBI" id="CHEBI:49883"/>
    </ligand>
</feature>
<comment type="function">
    <text evidence="1">Catalyzes the condensation of iminoaspartate with dihydroxyacetone phosphate to form quinolinate.</text>
</comment>
<comment type="catalytic activity">
    <reaction evidence="1">
        <text>iminosuccinate + dihydroxyacetone phosphate = quinolinate + phosphate + 2 H2O + H(+)</text>
        <dbReference type="Rhea" id="RHEA:25888"/>
        <dbReference type="ChEBI" id="CHEBI:15377"/>
        <dbReference type="ChEBI" id="CHEBI:15378"/>
        <dbReference type="ChEBI" id="CHEBI:29959"/>
        <dbReference type="ChEBI" id="CHEBI:43474"/>
        <dbReference type="ChEBI" id="CHEBI:57642"/>
        <dbReference type="ChEBI" id="CHEBI:77875"/>
        <dbReference type="EC" id="2.5.1.72"/>
    </reaction>
    <physiologicalReaction direction="left-to-right" evidence="1">
        <dbReference type="Rhea" id="RHEA:25889"/>
    </physiologicalReaction>
</comment>
<comment type="cofactor">
    <cofactor evidence="1">
        <name>[4Fe-4S] cluster</name>
        <dbReference type="ChEBI" id="CHEBI:49883"/>
    </cofactor>
    <text evidence="1">Binds 1 [4Fe-4S] cluster per subunit.</text>
</comment>
<comment type="pathway">
    <text evidence="1">Cofactor biosynthesis; NAD(+) biosynthesis; quinolinate from iminoaspartate: step 1/1.</text>
</comment>
<comment type="subcellular location">
    <subcellularLocation>
        <location evidence="1">Cytoplasm</location>
    </subcellularLocation>
</comment>
<comment type="similarity">
    <text evidence="1">Belongs to the quinolinate synthase family. Type 1 subfamily.</text>
</comment>
<accession>B6I7Q4</accession>
<protein>
    <recommendedName>
        <fullName evidence="1">Quinolinate synthase</fullName>
        <ecNumber evidence="1">2.5.1.72</ecNumber>
    </recommendedName>
</protein>
<organism>
    <name type="scientific">Escherichia coli (strain SE11)</name>
    <dbReference type="NCBI Taxonomy" id="409438"/>
    <lineage>
        <taxon>Bacteria</taxon>
        <taxon>Pseudomonadati</taxon>
        <taxon>Pseudomonadota</taxon>
        <taxon>Gammaproteobacteria</taxon>
        <taxon>Enterobacterales</taxon>
        <taxon>Enterobacteriaceae</taxon>
        <taxon>Escherichia</taxon>
    </lineage>
</organism>
<sequence>MSVMFDPDTAIYPFPPKPTPLSIDEKAYYREKIKRLLKERNAVMVAHYYTDPEIQQLAEETGGCISDSLEMARFGAKHPASTLLVAGVRFMGETAKILSPEKTILMPTLQAECSLDLGCPVEEFNAFCDAHPDRTVVVYANTSAAVKARADWVVTSSIAVELIDHLDSLGEKIIWAPDKHLGRYVQKQTGGDILCWQGACIVHDEFKTQALTRLQEEYPDAAILVHPESPQAIVDMADAVGSTSQLIAAAKTLPHQRLIVATDRGIFYKMQQAVPDKELLEAPTAGEGATCRSCAHCPWMAMNGLQSIAEALEQEGSNHEVHVDERLRERALVPLNRMLDFAATLRG</sequence>
<gene>
    <name evidence="1" type="primary">nadA</name>
    <name type="ordered locus">ECSE_0803</name>
</gene>
<evidence type="ECO:0000255" key="1">
    <source>
        <dbReference type="HAMAP-Rule" id="MF_00567"/>
    </source>
</evidence>
<name>NADA_ECOSE</name>
<proteinExistence type="inferred from homology"/>
<reference key="1">
    <citation type="journal article" date="2008" name="DNA Res.">
        <title>Complete genome sequence and comparative analysis of the wild-type commensal Escherichia coli strain SE11 isolated from a healthy adult.</title>
        <authorList>
            <person name="Oshima K."/>
            <person name="Toh H."/>
            <person name="Ogura Y."/>
            <person name="Sasamoto H."/>
            <person name="Morita H."/>
            <person name="Park S.-H."/>
            <person name="Ooka T."/>
            <person name="Iyoda S."/>
            <person name="Taylor T.D."/>
            <person name="Hayashi T."/>
            <person name="Itoh K."/>
            <person name="Hattori M."/>
        </authorList>
    </citation>
    <scope>NUCLEOTIDE SEQUENCE [LARGE SCALE GENOMIC DNA]</scope>
    <source>
        <strain>SE11</strain>
    </source>
</reference>
<dbReference type="EC" id="2.5.1.72" evidence="1"/>
<dbReference type="EMBL" id="AP009240">
    <property type="protein sequence ID" value="BAG76327.1"/>
    <property type="molecule type" value="Genomic_DNA"/>
</dbReference>
<dbReference type="RefSeq" id="WP_000115295.1">
    <property type="nucleotide sequence ID" value="NC_011415.1"/>
</dbReference>
<dbReference type="SMR" id="B6I7Q4"/>
<dbReference type="GeneID" id="75204865"/>
<dbReference type="KEGG" id="ecy:ECSE_0803"/>
<dbReference type="HOGENOM" id="CLU_047382_1_0_6"/>
<dbReference type="UniPathway" id="UPA00253">
    <property type="reaction ID" value="UER00327"/>
</dbReference>
<dbReference type="Proteomes" id="UP000008199">
    <property type="component" value="Chromosome"/>
</dbReference>
<dbReference type="GO" id="GO:0005829">
    <property type="term" value="C:cytosol"/>
    <property type="evidence" value="ECO:0007669"/>
    <property type="project" value="TreeGrafter"/>
</dbReference>
<dbReference type="GO" id="GO:0051539">
    <property type="term" value="F:4 iron, 4 sulfur cluster binding"/>
    <property type="evidence" value="ECO:0007669"/>
    <property type="project" value="UniProtKB-KW"/>
</dbReference>
<dbReference type="GO" id="GO:0046872">
    <property type="term" value="F:metal ion binding"/>
    <property type="evidence" value="ECO:0007669"/>
    <property type="project" value="UniProtKB-KW"/>
</dbReference>
<dbReference type="GO" id="GO:0008987">
    <property type="term" value="F:quinolinate synthetase A activity"/>
    <property type="evidence" value="ECO:0007669"/>
    <property type="project" value="UniProtKB-UniRule"/>
</dbReference>
<dbReference type="GO" id="GO:0034628">
    <property type="term" value="P:'de novo' NAD biosynthetic process from L-aspartate"/>
    <property type="evidence" value="ECO:0007669"/>
    <property type="project" value="TreeGrafter"/>
</dbReference>
<dbReference type="FunFam" id="3.40.50.10800:FF:000001">
    <property type="entry name" value="Quinolinate synthase A"/>
    <property type="match status" value="1"/>
</dbReference>
<dbReference type="FunFam" id="3.40.50.10800:FF:000003">
    <property type="entry name" value="Quinolinate synthase A"/>
    <property type="match status" value="1"/>
</dbReference>
<dbReference type="Gene3D" id="3.40.50.10800">
    <property type="entry name" value="NadA-like"/>
    <property type="match status" value="3"/>
</dbReference>
<dbReference type="HAMAP" id="MF_00567">
    <property type="entry name" value="NadA_type1"/>
    <property type="match status" value="1"/>
</dbReference>
<dbReference type="InterPro" id="IPR003473">
    <property type="entry name" value="NadA"/>
</dbReference>
<dbReference type="InterPro" id="IPR036094">
    <property type="entry name" value="NadA_sf"/>
</dbReference>
<dbReference type="InterPro" id="IPR023513">
    <property type="entry name" value="Quinolinate_synth_A_type1"/>
</dbReference>
<dbReference type="NCBIfam" id="TIGR00550">
    <property type="entry name" value="nadA"/>
    <property type="match status" value="1"/>
</dbReference>
<dbReference type="NCBIfam" id="NF006877">
    <property type="entry name" value="PRK09375.1-1"/>
    <property type="match status" value="1"/>
</dbReference>
<dbReference type="NCBIfam" id="NF006878">
    <property type="entry name" value="PRK09375.1-2"/>
    <property type="match status" value="1"/>
</dbReference>
<dbReference type="PANTHER" id="PTHR30573:SF0">
    <property type="entry name" value="QUINOLINATE SYNTHASE, CHLOROPLASTIC"/>
    <property type="match status" value="1"/>
</dbReference>
<dbReference type="PANTHER" id="PTHR30573">
    <property type="entry name" value="QUINOLINATE SYNTHETASE A"/>
    <property type="match status" value="1"/>
</dbReference>
<dbReference type="Pfam" id="PF02445">
    <property type="entry name" value="NadA"/>
    <property type="match status" value="1"/>
</dbReference>
<dbReference type="SUPFAM" id="SSF142754">
    <property type="entry name" value="NadA-like"/>
    <property type="match status" value="1"/>
</dbReference>
<keyword id="KW-0004">4Fe-4S</keyword>
<keyword id="KW-0963">Cytoplasm</keyword>
<keyword id="KW-0408">Iron</keyword>
<keyword id="KW-0411">Iron-sulfur</keyword>
<keyword id="KW-0479">Metal-binding</keyword>
<keyword id="KW-0662">Pyridine nucleotide biosynthesis</keyword>
<keyword id="KW-0808">Transferase</keyword>